<reference key="1">
    <citation type="submission" date="2007-07" db="EMBL/GenBank/DDBJ databases">
        <title>Genome sequence of Campylobacter curvus 525.92 isolated from human feces.</title>
        <authorList>
            <person name="Fouts D.E."/>
            <person name="Mongodin E.F."/>
            <person name="Puiu D."/>
            <person name="Sebastian Y."/>
            <person name="Miller W.G."/>
            <person name="Mandrell R.E."/>
            <person name="Lastovica A.J."/>
            <person name="Nelson K.E."/>
        </authorList>
    </citation>
    <scope>NUCLEOTIDE SEQUENCE [LARGE SCALE GENOMIC DNA]</scope>
    <source>
        <strain>525.92</strain>
    </source>
</reference>
<name>RL6_CAMC5</name>
<comment type="function">
    <text evidence="1">This protein binds to the 23S rRNA, and is important in its secondary structure. It is located near the subunit interface in the base of the L7/L12 stalk, and near the tRNA binding site of the peptidyltransferase center.</text>
</comment>
<comment type="subunit">
    <text evidence="1">Part of the 50S ribosomal subunit.</text>
</comment>
<comment type="similarity">
    <text evidence="1">Belongs to the universal ribosomal protein uL6 family.</text>
</comment>
<feature type="chain" id="PRO_1000055212" description="Large ribosomal subunit protein uL6">
    <location>
        <begin position="1"/>
        <end position="178"/>
    </location>
</feature>
<dbReference type="EMBL" id="CP000767">
    <property type="protein sequence ID" value="EAT99593.1"/>
    <property type="molecule type" value="Genomic_DNA"/>
</dbReference>
<dbReference type="RefSeq" id="WP_009649839.1">
    <property type="nucleotide sequence ID" value="NC_009715.2"/>
</dbReference>
<dbReference type="SMR" id="A7H0Z7"/>
<dbReference type="STRING" id="360105.CCV52592_1018"/>
<dbReference type="GeneID" id="61003083"/>
<dbReference type="KEGG" id="ccv:CCV52592_1018"/>
<dbReference type="HOGENOM" id="CLU_065464_1_2_7"/>
<dbReference type="OrthoDB" id="9805007at2"/>
<dbReference type="Proteomes" id="UP000006380">
    <property type="component" value="Chromosome"/>
</dbReference>
<dbReference type="GO" id="GO:0022625">
    <property type="term" value="C:cytosolic large ribosomal subunit"/>
    <property type="evidence" value="ECO:0007669"/>
    <property type="project" value="TreeGrafter"/>
</dbReference>
<dbReference type="GO" id="GO:0019843">
    <property type="term" value="F:rRNA binding"/>
    <property type="evidence" value="ECO:0007669"/>
    <property type="project" value="UniProtKB-UniRule"/>
</dbReference>
<dbReference type="GO" id="GO:0003735">
    <property type="term" value="F:structural constituent of ribosome"/>
    <property type="evidence" value="ECO:0007669"/>
    <property type="project" value="InterPro"/>
</dbReference>
<dbReference type="GO" id="GO:0002181">
    <property type="term" value="P:cytoplasmic translation"/>
    <property type="evidence" value="ECO:0007669"/>
    <property type="project" value="TreeGrafter"/>
</dbReference>
<dbReference type="FunFam" id="3.90.930.12:FF:000001">
    <property type="entry name" value="50S ribosomal protein L6"/>
    <property type="match status" value="1"/>
</dbReference>
<dbReference type="Gene3D" id="3.90.930.12">
    <property type="entry name" value="Ribosomal protein L6, alpha-beta domain"/>
    <property type="match status" value="2"/>
</dbReference>
<dbReference type="HAMAP" id="MF_01365_B">
    <property type="entry name" value="Ribosomal_uL6_B"/>
    <property type="match status" value="1"/>
</dbReference>
<dbReference type="InterPro" id="IPR000702">
    <property type="entry name" value="Ribosomal_uL6-like"/>
</dbReference>
<dbReference type="InterPro" id="IPR036789">
    <property type="entry name" value="Ribosomal_uL6-like_a/b-dom_sf"/>
</dbReference>
<dbReference type="InterPro" id="IPR020040">
    <property type="entry name" value="Ribosomal_uL6_a/b-dom"/>
</dbReference>
<dbReference type="InterPro" id="IPR019906">
    <property type="entry name" value="Ribosomal_uL6_bac-type"/>
</dbReference>
<dbReference type="InterPro" id="IPR002358">
    <property type="entry name" value="Ribosomal_uL6_CS"/>
</dbReference>
<dbReference type="NCBIfam" id="TIGR03654">
    <property type="entry name" value="L6_bact"/>
    <property type="match status" value="1"/>
</dbReference>
<dbReference type="PANTHER" id="PTHR11655">
    <property type="entry name" value="60S/50S RIBOSOMAL PROTEIN L6/L9"/>
    <property type="match status" value="1"/>
</dbReference>
<dbReference type="PANTHER" id="PTHR11655:SF14">
    <property type="entry name" value="LARGE RIBOSOMAL SUBUNIT PROTEIN UL6M"/>
    <property type="match status" value="1"/>
</dbReference>
<dbReference type="Pfam" id="PF00347">
    <property type="entry name" value="Ribosomal_L6"/>
    <property type="match status" value="2"/>
</dbReference>
<dbReference type="PIRSF" id="PIRSF002162">
    <property type="entry name" value="Ribosomal_L6"/>
    <property type="match status" value="1"/>
</dbReference>
<dbReference type="PRINTS" id="PR00059">
    <property type="entry name" value="RIBOSOMALL6"/>
</dbReference>
<dbReference type="SUPFAM" id="SSF56053">
    <property type="entry name" value="Ribosomal protein L6"/>
    <property type="match status" value="2"/>
</dbReference>
<dbReference type="PROSITE" id="PS00525">
    <property type="entry name" value="RIBOSOMAL_L6_1"/>
    <property type="match status" value="1"/>
</dbReference>
<accession>A7H0Z7</accession>
<proteinExistence type="inferred from homology"/>
<protein>
    <recommendedName>
        <fullName evidence="1">Large ribosomal subunit protein uL6</fullName>
    </recommendedName>
    <alternativeName>
        <fullName evidence="2">50S ribosomal protein L6</fullName>
    </alternativeName>
</protein>
<gene>
    <name evidence="1" type="primary">rplF</name>
    <name type="ordered locus">Ccur92_18350</name>
    <name type="ORF">CCV52592_1018</name>
</gene>
<keyword id="KW-1185">Reference proteome</keyword>
<keyword id="KW-0687">Ribonucleoprotein</keyword>
<keyword id="KW-0689">Ribosomal protein</keyword>
<keyword id="KW-0694">RNA-binding</keyword>
<keyword id="KW-0699">rRNA-binding</keyword>
<evidence type="ECO:0000255" key="1">
    <source>
        <dbReference type="HAMAP-Rule" id="MF_01365"/>
    </source>
</evidence>
<evidence type="ECO:0000305" key="2"/>
<organism>
    <name type="scientific">Campylobacter curvus (strain 525.92)</name>
    <dbReference type="NCBI Taxonomy" id="360105"/>
    <lineage>
        <taxon>Bacteria</taxon>
        <taxon>Pseudomonadati</taxon>
        <taxon>Campylobacterota</taxon>
        <taxon>Epsilonproteobacteria</taxon>
        <taxon>Campylobacterales</taxon>
        <taxon>Campylobacteraceae</taxon>
        <taxon>Campylobacter</taxon>
    </lineage>
</organism>
<sequence>MSRIGKQPIAIPSGVDVSVANSVLKFKKGNNTKELDTKGHVDVKVENGHIVFSPKGDDRQSRAYWGTYRALANNIVTGLTSGFTRQLEINGVGYKAAAKGKILELTLGFSHLINYELPSGVEASVDKNIITIKGDDKQVVGQVAAQVRGFRPPEPYKGKGVKYVEERIIRKAGKTSKK</sequence>